<dbReference type="EC" id="1.14.14.1" evidence="3"/>
<dbReference type="EC" id="4.2.1.152" evidence="3"/>
<dbReference type="EMBL" id="AB199730">
    <property type="protein sequence ID" value="BAD86852.1"/>
    <property type="molecule type" value="mRNA"/>
</dbReference>
<dbReference type="RefSeq" id="NP_001020030.1">
    <property type="nucleotide sequence ID" value="NM_001024859.1"/>
</dbReference>
<dbReference type="RefSeq" id="XP_011281142.1">
    <property type="nucleotide sequence ID" value="XM_011282840.3"/>
</dbReference>
<dbReference type="RefSeq" id="XP_019687292.1">
    <property type="nucleotide sequence ID" value="XM_019831733.2"/>
</dbReference>
<dbReference type="RefSeq" id="XP_019687293.1">
    <property type="nucleotide sequence ID" value="XM_019831734.2"/>
</dbReference>
<dbReference type="SMR" id="Q5KQT7"/>
<dbReference type="FunCoup" id="Q5KQT7">
    <property type="interactions" value="12"/>
</dbReference>
<dbReference type="GlyCosmos" id="Q5KQT7">
    <property type="glycosylation" value="1 site, No reported glycans"/>
</dbReference>
<dbReference type="PaxDb" id="9685-ENSFCAP00000001863"/>
<dbReference type="GeneID" id="554347"/>
<dbReference type="KEGG" id="fca:554347"/>
<dbReference type="CTD" id="1543"/>
<dbReference type="eggNOG" id="KOG0156">
    <property type="taxonomic scope" value="Eukaryota"/>
</dbReference>
<dbReference type="HOGENOM" id="CLU_001570_22_0_1"/>
<dbReference type="InParanoid" id="Q5KQT7"/>
<dbReference type="OrthoDB" id="1055148at2759"/>
<dbReference type="UniPathway" id="UPA00199"/>
<dbReference type="UniPathway" id="UPA00912"/>
<dbReference type="Proteomes" id="UP000011712">
    <property type="component" value="Unplaced"/>
</dbReference>
<dbReference type="GO" id="GO:0005789">
    <property type="term" value="C:endoplasmic reticulum membrane"/>
    <property type="evidence" value="ECO:0007669"/>
    <property type="project" value="UniProtKB-SubCell"/>
</dbReference>
<dbReference type="GO" id="GO:0043231">
    <property type="term" value="C:intracellular membrane-bounded organelle"/>
    <property type="evidence" value="ECO:0000318"/>
    <property type="project" value="GO_Central"/>
</dbReference>
<dbReference type="GO" id="GO:0005743">
    <property type="term" value="C:mitochondrial inner membrane"/>
    <property type="evidence" value="ECO:0000250"/>
    <property type="project" value="UniProtKB"/>
</dbReference>
<dbReference type="GO" id="GO:0008391">
    <property type="term" value="F:arachidonate monooxygenase activity"/>
    <property type="evidence" value="ECO:0007669"/>
    <property type="project" value="Ensembl"/>
</dbReference>
<dbReference type="GO" id="GO:0101020">
    <property type="term" value="F:estrogen 16-alpha-hydroxylase activity"/>
    <property type="evidence" value="ECO:0000250"/>
    <property type="project" value="UniProtKB"/>
</dbReference>
<dbReference type="GO" id="GO:0101021">
    <property type="term" value="F:estrogen 2-hydroxylase activity"/>
    <property type="evidence" value="ECO:0000250"/>
    <property type="project" value="UniProtKB"/>
</dbReference>
<dbReference type="GO" id="GO:0020037">
    <property type="term" value="F:heme binding"/>
    <property type="evidence" value="ECO:0007669"/>
    <property type="project" value="InterPro"/>
</dbReference>
<dbReference type="GO" id="GO:0030544">
    <property type="term" value="F:Hsp70 protein binding"/>
    <property type="evidence" value="ECO:0000250"/>
    <property type="project" value="UniProtKB"/>
</dbReference>
<dbReference type="GO" id="GO:0051879">
    <property type="term" value="F:Hsp90 protein binding"/>
    <property type="evidence" value="ECO:0000250"/>
    <property type="project" value="UniProtKB"/>
</dbReference>
<dbReference type="GO" id="GO:0106256">
    <property type="term" value="F:hydroperoxy icosatetraenoate dehydratase activity"/>
    <property type="evidence" value="ECO:0007669"/>
    <property type="project" value="UniProtKB-EC"/>
</dbReference>
<dbReference type="GO" id="GO:0005506">
    <property type="term" value="F:iron ion binding"/>
    <property type="evidence" value="ECO:0007669"/>
    <property type="project" value="InterPro"/>
</dbReference>
<dbReference type="GO" id="GO:0120319">
    <property type="term" value="F:long-chain fatty acid omega-1 hydroxylase activity"/>
    <property type="evidence" value="ECO:0007669"/>
    <property type="project" value="Ensembl"/>
</dbReference>
<dbReference type="GO" id="GO:0102033">
    <property type="term" value="F:long-chain fatty acid omega-hydroxylase activity"/>
    <property type="evidence" value="ECO:0007669"/>
    <property type="project" value="Ensembl"/>
</dbReference>
<dbReference type="GO" id="GO:0004497">
    <property type="term" value="F:monooxygenase activity"/>
    <property type="evidence" value="ECO:0000318"/>
    <property type="project" value="GO_Central"/>
</dbReference>
<dbReference type="GO" id="GO:0070576">
    <property type="term" value="F:vitamin D 24-hydroxylase activity"/>
    <property type="evidence" value="ECO:0007669"/>
    <property type="project" value="Ensembl"/>
</dbReference>
<dbReference type="GO" id="GO:0009308">
    <property type="term" value="P:amine metabolic process"/>
    <property type="evidence" value="ECO:0007669"/>
    <property type="project" value="Ensembl"/>
</dbReference>
<dbReference type="GO" id="GO:0008210">
    <property type="term" value="P:estrogen metabolic process"/>
    <property type="evidence" value="ECO:0000250"/>
    <property type="project" value="UniProtKB"/>
</dbReference>
<dbReference type="GO" id="GO:0050665">
    <property type="term" value="P:hydrogen peroxide biosynthetic process"/>
    <property type="evidence" value="ECO:0007669"/>
    <property type="project" value="Ensembl"/>
</dbReference>
<dbReference type="GO" id="GO:0002933">
    <property type="term" value="P:lipid hydroxylation"/>
    <property type="evidence" value="ECO:0007669"/>
    <property type="project" value="Ensembl"/>
</dbReference>
<dbReference type="GO" id="GO:0001676">
    <property type="term" value="P:long-chain fatty acid metabolic process"/>
    <property type="evidence" value="ECO:0007669"/>
    <property type="project" value="Ensembl"/>
</dbReference>
<dbReference type="GO" id="GO:0018958">
    <property type="term" value="P:phenol-containing compound metabolic process"/>
    <property type="evidence" value="ECO:0007669"/>
    <property type="project" value="Ensembl"/>
</dbReference>
<dbReference type="GO" id="GO:0009636">
    <property type="term" value="P:response to toxic substance"/>
    <property type="evidence" value="ECO:0007669"/>
    <property type="project" value="Ensembl"/>
</dbReference>
<dbReference type="GO" id="GO:0042572">
    <property type="term" value="P:retinol metabolic process"/>
    <property type="evidence" value="ECO:0000250"/>
    <property type="project" value="UniProtKB"/>
</dbReference>
<dbReference type="GO" id="GO:0006694">
    <property type="term" value="P:steroid biosynthetic process"/>
    <property type="evidence" value="ECO:0007669"/>
    <property type="project" value="UniProtKB-KW"/>
</dbReference>
<dbReference type="GO" id="GO:0009404">
    <property type="term" value="P:toxin metabolic process"/>
    <property type="evidence" value="ECO:0007669"/>
    <property type="project" value="Ensembl"/>
</dbReference>
<dbReference type="GO" id="GO:0042359">
    <property type="term" value="P:vitamin D metabolic process"/>
    <property type="evidence" value="ECO:0007669"/>
    <property type="project" value="Ensembl"/>
</dbReference>
<dbReference type="GO" id="GO:0006805">
    <property type="term" value="P:xenobiotic metabolic process"/>
    <property type="evidence" value="ECO:0007669"/>
    <property type="project" value="Ensembl"/>
</dbReference>
<dbReference type="CDD" id="cd20676">
    <property type="entry name" value="CYP1A"/>
    <property type="match status" value="1"/>
</dbReference>
<dbReference type="FunFam" id="1.10.630.10:FF:000002">
    <property type="entry name" value="Cytochrome P450 1A1"/>
    <property type="match status" value="1"/>
</dbReference>
<dbReference type="Gene3D" id="1.10.630.10">
    <property type="entry name" value="Cytochrome P450"/>
    <property type="match status" value="1"/>
</dbReference>
<dbReference type="InterPro" id="IPR001128">
    <property type="entry name" value="Cyt_P450"/>
</dbReference>
<dbReference type="InterPro" id="IPR017972">
    <property type="entry name" value="Cyt_P450_CS"/>
</dbReference>
<dbReference type="InterPro" id="IPR002401">
    <property type="entry name" value="Cyt_P450_E_grp-I"/>
</dbReference>
<dbReference type="InterPro" id="IPR008066">
    <property type="entry name" value="Cyt_P450_E_grp-I_CYP1"/>
</dbReference>
<dbReference type="InterPro" id="IPR036396">
    <property type="entry name" value="Cyt_P450_sf"/>
</dbReference>
<dbReference type="PANTHER" id="PTHR24289:SF21">
    <property type="entry name" value="CYTOCHROME P450 1A"/>
    <property type="match status" value="1"/>
</dbReference>
<dbReference type="PANTHER" id="PTHR24289">
    <property type="entry name" value="STEROID 17-ALPHA-HYDROXYLASE/17,20 LYASE"/>
    <property type="match status" value="1"/>
</dbReference>
<dbReference type="Pfam" id="PF00067">
    <property type="entry name" value="p450"/>
    <property type="match status" value="1"/>
</dbReference>
<dbReference type="PRINTS" id="PR00463">
    <property type="entry name" value="EP450I"/>
</dbReference>
<dbReference type="PRINTS" id="PR01683">
    <property type="entry name" value="EP450ICYP1A"/>
</dbReference>
<dbReference type="PRINTS" id="PR00385">
    <property type="entry name" value="P450"/>
</dbReference>
<dbReference type="SUPFAM" id="SSF48264">
    <property type="entry name" value="Cytochrome P450"/>
    <property type="match status" value="1"/>
</dbReference>
<dbReference type="PROSITE" id="PS00086">
    <property type="entry name" value="CYTOCHROME_P450"/>
    <property type="match status" value="1"/>
</dbReference>
<reference key="1">
    <citation type="submission" date="2005-01" db="EMBL/GenBank/DDBJ databases">
        <title>Feline cytochrome P450 1A1.</title>
        <authorList>
            <person name="Tanaka N."/>
            <person name="Yokota H."/>
        </authorList>
    </citation>
    <scope>NUCLEOTIDE SEQUENCE [MRNA]</scope>
    <source>
        <tissue>Liver</tissue>
    </source>
</reference>
<feature type="chain" id="PRO_0000226726" description="Cytochrome P450 1A1">
    <location>
        <begin position="1"/>
        <end position="517"/>
    </location>
</feature>
<feature type="region of interest" description="Mitochondrial targeting signal" evidence="2">
    <location>
        <begin position="34"/>
        <end position="45"/>
    </location>
</feature>
<feature type="binding site" evidence="1">
    <location>
        <position position="229"/>
    </location>
    <ligand>
        <name>substrate</name>
    </ligand>
</feature>
<feature type="binding site" description="axial binding residue" evidence="1">
    <location>
        <position position="462"/>
    </location>
    <ligand>
        <name>heme</name>
        <dbReference type="ChEBI" id="CHEBI:30413"/>
    </ligand>
    <ligandPart>
        <name>Fe</name>
        <dbReference type="ChEBI" id="CHEBI:18248"/>
    </ligandPart>
</feature>
<feature type="glycosylation site" description="O-linked (GlcNAc) serine" evidence="1">
    <location>
        <position position="72"/>
    </location>
</feature>
<name>CP1A1_FELCA</name>
<keyword id="KW-0963">Cytoplasm</keyword>
<keyword id="KW-0256">Endoplasmic reticulum</keyword>
<keyword id="KW-0325">Glycoprotein</keyword>
<keyword id="KW-0349">Heme</keyword>
<keyword id="KW-0408">Iron</keyword>
<keyword id="KW-0444">Lipid biosynthesis</keyword>
<keyword id="KW-0443">Lipid metabolism</keyword>
<keyword id="KW-0456">Lyase</keyword>
<keyword id="KW-0472">Membrane</keyword>
<keyword id="KW-0479">Metal-binding</keyword>
<keyword id="KW-0492">Microsome</keyword>
<keyword id="KW-0496">Mitochondrion</keyword>
<keyword id="KW-0999">Mitochondrion inner membrane</keyword>
<keyword id="KW-0503">Monooxygenase</keyword>
<keyword id="KW-0560">Oxidoreductase</keyword>
<keyword id="KW-1185">Reference proteome</keyword>
<keyword id="KW-0752">Steroid biosynthesis</keyword>
<sequence length="517" mass="58707">MMLSVFGLSVPISATELLLASFVFCLVFWVVRAWQPRVPKGLKSPPGPWGWPLLGHVLTLGKNPHLVLARLSQHYGDVLQIRIGSTPVLVLSGLDTIRQALVRQGDDFKGRPNLYSFTLISEGQSMSFSPDSGPVWAARRRLAQNALKSFSIASDPASSSSCYLEDHVSKEAEYLIGKFQELMAKVGHFDPYRYVVVSVANVICAMCFGRRYDHDDQELLSIVNLSNEFGDGTASGNPVDFFPILRYLPNPALDFFKDVNEKFSIFIHKMVKEHYKTFEKGHIRDITDSLIEHCQDKRLDENANIQLSDEKIVNVVSDLFGAGFDTVTTAISWCLMYLVTSPNVQEKIQKELDTVIGRERQPRLSDRLQLPYMEAFILEMFRHTSFVPFTIPHSTTKDTSLSGFYIPKERCVFVNQWQINHDQKLWGDPSEFRPERFLTPDGTINKALSEKVILFGLGKRKCIGETIARLEVFLFLAILLQQVEFSVPQGTKVDMTPIYGLTMKHARCEHFQVRMRT</sequence>
<accession>Q5KQT7</accession>
<gene>
    <name type="primary">CYP1A1</name>
</gene>
<protein>
    <recommendedName>
        <fullName>Cytochrome P450 1A1</fullName>
        <ecNumber evidence="3">1.14.14.1</ecNumber>
    </recommendedName>
    <alternativeName>
        <fullName>CYPIA1</fullName>
    </alternativeName>
    <alternativeName>
        <fullName>Cytochrome P450 form 6</fullName>
    </alternativeName>
    <alternativeName>
        <fullName>Cytochrome P450-C</fullName>
    </alternativeName>
    <alternativeName>
        <fullName>Cytochrome P450-P1</fullName>
    </alternativeName>
    <alternativeName>
        <fullName>Hydroperoxy icosatetraenoate dehydratase</fullName>
        <ecNumber evidence="3">4.2.1.152</ecNumber>
    </alternativeName>
</protein>
<comment type="function">
    <text evidence="3">A cytochrome P450 monooxygenase involved in the metabolism of various endogenous substrates, including fatty acids, steroid hormones and vitamins. Mechanistically, uses molecular oxygen inserting one oxygen atom into a substrate, and reducing the second into a water molecule, with two electrons provided by NADPH via cytochrome P450 reductase (CPR; NADPH-ferrihemoprotein reductase). Catalyzes the hydroxylation of carbon-hydrogen bonds. Exhibits high catalytic activity for the formation of hydroxyestrogens from estrone (E1) and 17beta-estradiol (E2), namely 2-hydroxy E1 and E2, as well as D-ring hydroxylated E1 and E2 at the C15alpha and C16alpha positions. Displays different regioselectivities for polyunsaturated fatty acids (PUFA) hydroxylation. Catalyzes the epoxidation of double bonds of certain PUFA. Converts arachidonic acid toward epoxyeicosatrienoic acid (EET) regioisomers, 8,9-, 11,12-, and 14,15-EET, that function as lipid mediators in the vascular system. Displays an absolute stereoselectivity in the epoxidation of eicosapentaenoic acid (EPA) producing the 17(R),18(S) enantiomer. May play an important role in all-trans retinoic acid biosynthesis in extrahepatic tissues. Catalyzes two successive oxidative transformation of all-trans retinol to all-trans retinal and then to the active form all-trans retinoic acid. May also participate in eicosanoids metabolism by converting hydroperoxide species into oxo metabolites (lipoxygenase-like reaction, NADPH-independent).</text>
</comment>
<comment type="catalytic activity">
    <reaction evidence="3">
        <text>an organic molecule + reduced [NADPH--hemoprotein reductase] + O2 = an alcohol + oxidized [NADPH--hemoprotein reductase] + H2O + H(+)</text>
        <dbReference type="Rhea" id="RHEA:17149"/>
        <dbReference type="Rhea" id="RHEA-COMP:11964"/>
        <dbReference type="Rhea" id="RHEA-COMP:11965"/>
        <dbReference type="ChEBI" id="CHEBI:15377"/>
        <dbReference type="ChEBI" id="CHEBI:15378"/>
        <dbReference type="ChEBI" id="CHEBI:15379"/>
        <dbReference type="ChEBI" id="CHEBI:30879"/>
        <dbReference type="ChEBI" id="CHEBI:57618"/>
        <dbReference type="ChEBI" id="CHEBI:58210"/>
        <dbReference type="ChEBI" id="CHEBI:142491"/>
        <dbReference type="EC" id="1.14.14.1"/>
    </reaction>
    <physiologicalReaction direction="right-to-left" evidence="3">
        <dbReference type="Rhea" id="RHEA:17151"/>
    </physiologicalReaction>
</comment>
<comment type="catalytic activity">
    <reaction evidence="3">
        <text>estrone + reduced [NADPH--hemoprotein reductase] + O2 = 2-hydroxyestrone + oxidized [NADPH--hemoprotein reductase] + H2O + H(+)</text>
        <dbReference type="Rhea" id="RHEA:47208"/>
        <dbReference type="Rhea" id="RHEA-COMP:11964"/>
        <dbReference type="Rhea" id="RHEA-COMP:11965"/>
        <dbReference type="ChEBI" id="CHEBI:1156"/>
        <dbReference type="ChEBI" id="CHEBI:15377"/>
        <dbReference type="ChEBI" id="CHEBI:15378"/>
        <dbReference type="ChEBI" id="CHEBI:15379"/>
        <dbReference type="ChEBI" id="CHEBI:17263"/>
        <dbReference type="ChEBI" id="CHEBI:57618"/>
        <dbReference type="ChEBI" id="CHEBI:58210"/>
    </reaction>
    <physiologicalReaction direction="left-to-right" evidence="3">
        <dbReference type="Rhea" id="RHEA:47209"/>
    </physiologicalReaction>
</comment>
<comment type="catalytic activity">
    <reaction evidence="3">
        <text>estrone + reduced [NADPH--hemoprotein reductase] + O2 = 4-hydroxyestrone + oxidized [NADPH--hemoprotein reductase] + H2O + H(+)</text>
        <dbReference type="Rhea" id="RHEA:47292"/>
        <dbReference type="Rhea" id="RHEA-COMP:11964"/>
        <dbReference type="Rhea" id="RHEA-COMP:11965"/>
        <dbReference type="ChEBI" id="CHEBI:15377"/>
        <dbReference type="ChEBI" id="CHEBI:15378"/>
        <dbReference type="ChEBI" id="CHEBI:15379"/>
        <dbReference type="ChEBI" id="CHEBI:17263"/>
        <dbReference type="ChEBI" id="CHEBI:57618"/>
        <dbReference type="ChEBI" id="CHEBI:58210"/>
        <dbReference type="ChEBI" id="CHEBI:87602"/>
    </reaction>
    <physiologicalReaction direction="left-to-right" evidence="3">
        <dbReference type="Rhea" id="RHEA:47293"/>
    </physiologicalReaction>
</comment>
<comment type="catalytic activity">
    <reaction evidence="3">
        <text>estrone + reduced [NADPH--hemoprotein reductase] + O2 = 6alpha-hydroxyestrone + oxidized [NADPH--hemoprotein reductase] + H2O + H(+)</text>
        <dbReference type="Rhea" id="RHEA:47308"/>
        <dbReference type="Rhea" id="RHEA-COMP:11964"/>
        <dbReference type="Rhea" id="RHEA-COMP:11965"/>
        <dbReference type="ChEBI" id="CHEBI:15377"/>
        <dbReference type="ChEBI" id="CHEBI:15378"/>
        <dbReference type="ChEBI" id="CHEBI:15379"/>
        <dbReference type="ChEBI" id="CHEBI:17263"/>
        <dbReference type="ChEBI" id="CHEBI:57618"/>
        <dbReference type="ChEBI" id="CHEBI:58210"/>
        <dbReference type="ChEBI" id="CHEBI:87605"/>
    </reaction>
    <physiologicalReaction direction="left-to-right" evidence="3">
        <dbReference type="Rhea" id="RHEA:47309"/>
    </physiologicalReaction>
</comment>
<comment type="catalytic activity">
    <reaction evidence="3">
        <text>estrone + reduced [NADPH--hemoprotein reductase] + O2 = 15alpha-hydroxyestrone + oxidized [NADPH--hemoprotein reductase] + H2O + H(+)</text>
        <dbReference type="Rhea" id="RHEA:47312"/>
        <dbReference type="Rhea" id="RHEA-COMP:11964"/>
        <dbReference type="Rhea" id="RHEA-COMP:11965"/>
        <dbReference type="ChEBI" id="CHEBI:15377"/>
        <dbReference type="ChEBI" id="CHEBI:15378"/>
        <dbReference type="ChEBI" id="CHEBI:15379"/>
        <dbReference type="ChEBI" id="CHEBI:17263"/>
        <dbReference type="ChEBI" id="CHEBI:57618"/>
        <dbReference type="ChEBI" id="CHEBI:58210"/>
        <dbReference type="ChEBI" id="CHEBI:87618"/>
    </reaction>
    <physiologicalReaction direction="left-to-right" evidence="3">
        <dbReference type="Rhea" id="RHEA:47313"/>
    </physiologicalReaction>
</comment>
<comment type="catalytic activity">
    <reaction evidence="3">
        <text>estrone + reduced [NADPH--hemoprotein reductase] + O2 = 16alpha-hydroxyestrone + oxidized [NADPH--hemoprotein reductase] + H2O + H(+)</text>
        <dbReference type="Rhea" id="RHEA:47204"/>
        <dbReference type="Rhea" id="RHEA-COMP:11964"/>
        <dbReference type="Rhea" id="RHEA-COMP:11965"/>
        <dbReference type="ChEBI" id="CHEBI:776"/>
        <dbReference type="ChEBI" id="CHEBI:15377"/>
        <dbReference type="ChEBI" id="CHEBI:15378"/>
        <dbReference type="ChEBI" id="CHEBI:15379"/>
        <dbReference type="ChEBI" id="CHEBI:17263"/>
        <dbReference type="ChEBI" id="CHEBI:57618"/>
        <dbReference type="ChEBI" id="CHEBI:58210"/>
    </reaction>
    <physiologicalReaction direction="left-to-right" evidence="3">
        <dbReference type="Rhea" id="RHEA:47205"/>
    </physiologicalReaction>
</comment>
<comment type="catalytic activity">
    <reaction evidence="3">
        <text>17beta-estradiol + reduced [NADPH--hemoprotein reductase] + O2 = 2-hydroxy-17beta-estradiol + oxidized [NADPH--hemoprotein reductase] + H2O + H(+)</text>
        <dbReference type="Rhea" id="RHEA:47212"/>
        <dbReference type="Rhea" id="RHEA-COMP:11964"/>
        <dbReference type="Rhea" id="RHEA-COMP:11965"/>
        <dbReference type="ChEBI" id="CHEBI:15377"/>
        <dbReference type="ChEBI" id="CHEBI:15378"/>
        <dbReference type="ChEBI" id="CHEBI:15379"/>
        <dbReference type="ChEBI" id="CHEBI:16469"/>
        <dbReference type="ChEBI" id="CHEBI:28744"/>
        <dbReference type="ChEBI" id="CHEBI:57618"/>
        <dbReference type="ChEBI" id="CHEBI:58210"/>
    </reaction>
    <physiologicalReaction direction="left-to-right" evidence="3">
        <dbReference type="Rhea" id="RHEA:47213"/>
    </physiologicalReaction>
</comment>
<comment type="catalytic activity">
    <reaction evidence="3">
        <text>17beta-estradiol + reduced [NADPH--hemoprotein reductase] + O2 = 4-hydroxy-17beta-estradiol + oxidized [NADPH--hemoprotein reductase] + H2O + H(+)</text>
        <dbReference type="Rhea" id="RHEA:47280"/>
        <dbReference type="Rhea" id="RHEA-COMP:11964"/>
        <dbReference type="Rhea" id="RHEA-COMP:11965"/>
        <dbReference type="ChEBI" id="CHEBI:15377"/>
        <dbReference type="ChEBI" id="CHEBI:15378"/>
        <dbReference type="ChEBI" id="CHEBI:15379"/>
        <dbReference type="ChEBI" id="CHEBI:16469"/>
        <dbReference type="ChEBI" id="CHEBI:57618"/>
        <dbReference type="ChEBI" id="CHEBI:58210"/>
        <dbReference type="ChEBI" id="CHEBI:62845"/>
    </reaction>
    <physiologicalReaction direction="left-to-right" evidence="3">
        <dbReference type="Rhea" id="RHEA:47281"/>
    </physiologicalReaction>
</comment>
<comment type="catalytic activity">
    <reaction evidence="3">
        <text>17beta-estradiol + reduced [NADPH--hemoprotein reductase] + O2 = 6alpha-hydroxy-17beta-estradiol + oxidized [NADPH--hemoprotein reductase] + H2O + H(+)</text>
        <dbReference type="Rhea" id="RHEA:47284"/>
        <dbReference type="Rhea" id="RHEA-COMP:11964"/>
        <dbReference type="Rhea" id="RHEA-COMP:11965"/>
        <dbReference type="ChEBI" id="CHEBI:15377"/>
        <dbReference type="ChEBI" id="CHEBI:15378"/>
        <dbReference type="ChEBI" id="CHEBI:15379"/>
        <dbReference type="ChEBI" id="CHEBI:16469"/>
        <dbReference type="ChEBI" id="CHEBI:57618"/>
        <dbReference type="ChEBI" id="CHEBI:58210"/>
        <dbReference type="ChEBI" id="CHEBI:62847"/>
    </reaction>
    <physiologicalReaction direction="left-to-right" evidence="3">
        <dbReference type="Rhea" id="RHEA:47285"/>
    </physiologicalReaction>
</comment>
<comment type="catalytic activity">
    <reaction evidence="3">
        <text>17beta-estradiol + reduced [NADPH--hemoprotein reductase] + O2 = 7alpha-hydroxy-17beta-estradiol + oxidized [NADPH--hemoprotein reductase] + H2O + H(+)</text>
        <dbReference type="Rhea" id="RHEA:47288"/>
        <dbReference type="Rhea" id="RHEA-COMP:11964"/>
        <dbReference type="Rhea" id="RHEA-COMP:11965"/>
        <dbReference type="ChEBI" id="CHEBI:15377"/>
        <dbReference type="ChEBI" id="CHEBI:15378"/>
        <dbReference type="ChEBI" id="CHEBI:15379"/>
        <dbReference type="ChEBI" id="CHEBI:16469"/>
        <dbReference type="ChEBI" id="CHEBI:57618"/>
        <dbReference type="ChEBI" id="CHEBI:58210"/>
        <dbReference type="ChEBI" id="CHEBI:87598"/>
    </reaction>
    <physiologicalReaction direction="left-to-right" evidence="3">
        <dbReference type="Rhea" id="RHEA:47289"/>
    </physiologicalReaction>
</comment>
<comment type="catalytic activity">
    <reaction evidence="3">
        <text>17beta-estradiol + reduced [NADPH--hemoprotein reductase] + O2 = 15alpha-hydroxy-17beta-estradiol + oxidized [NADPH--hemoprotein reductase] + H2O + H(+)</text>
        <dbReference type="Rhea" id="RHEA:47276"/>
        <dbReference type="Rhea" id="RHEA-COMP:11964"/>
        <dbReference type="Rhea" id="RHEA-COMP:11965"/>
        <dbReference type="ChEBI" id="CHEBI:15377"/>
        <dbReference type="ChEBI" id="CHEBI:15378"/>
        <dbReference type="ChEBI" id="CHEBI:15379"/>
        <dbReference type="ChEBI" id="CHEBI:16469"/>
        <dbReference type="ChEBI" id="CHEBI:57618"/>
        <dbReference type="ChEBI" id="CHEBI:58210"/>
        <dbReference type="ChEBI" id="CHEBI:87593"/>
    </reaction>
    <physiologicalReaction direction="left-to-right" evidence="3">
        <dbReference type="Rhea" id="RHEA:47277"/>
    </physiologicalReaction>
</comment>
<comment type="catalytic activity">
    <reaction evidence="3">
        <text>(5Z,8Z,11Z)-eicosatrienoate + reduced [NADPH--hemoprotein reductase] + O2 = 19-hydroxy-(5Z,8Z,11Z)-eicosatrienoate + oxidized [NADPH--hemoprotein reductase] + H2O + H(+)</text>
        <dbReference type="Rhea" id="RHEA:50076"/>
        <dbReference type="Rhea" id="RHEA-COMP:11964"/>
        <dbReference type="Rhea" id="RHEA-COMP:11965"/>
        <dbReference type="ChEBI" id="CHEBI:15377"/>
        <dbReference type="ChEBI" id="CHEBI:15378"/>
        <dbReference type="ChEBI" id="CHEBI:15379"/>
        <dbReference type="ChEBI" id="CHEBI:57618"/>
        <dbReference type="ChEBI" id="CHEBI:58210"/>
        <dbReference type="ChEBI" id="CHEBI:78043"/>
        <dbReference type="ChEBI" id="CHEBI:132024"/>
    </reaction>
    <physiologicalReaction direction="left-to-right" evidence="3">
        <dbReference type="Rhea" id="RHEA:50077"/>
    </physiologicalReaction>
</comment>
<comment type="catalytic activity">
    <reaction evidence="3">
        <text>(5Z,8Z,11Z,14Z)-eicosatetraenoate + reduced [NADPH--hemoprotein reductase] + O2 = 16-hydroxy-(5Z,8Z,11Z,14Z)-eicosatetraenoate + oxidized [NADPH--hemoprotein reductase] + H2O + H(+)</text>
        <dbReference type="Rhea" id="RHEA:49972"/>
        <dbReference type="Rhea" id="RHEA-COMP:11964"/>
        <dbReference type="Rhea" id="RHEA-COMP:11965"/>
        <dbReference type="ChEBI" id="CHEBI:15377"/>
        <dbReference type="ChEBI" id="CHEBI:15378"/>
        <dbReference type="ChEBI" id="CHEBI:15379"/>
        <dbReference type="ChEBI" id="CHEBI:32395"/>
        <dbReference type="ChEBI" id="CHEBI:57618"/>
        <dbReference type="ChEBI" id="CHEBI:58210"/>
        <dbReference type="ChEBI" id="CHEBI:132019"/>
    </reaction>
    <physiologicalReaction direction="left-to-right" evidence="3">
        <dbReference type="Rhea" id="RHEA:49973"/>
    </physiologicalReaction>
</comment>
<comment type="catalytic activity">
    <reaction evidence="3">
        <text>(5Z,8Z,11Z,14Z)-eicosatetraenoate + reduced [NADPH--hemoprotein reductase] + O2 = 17-hydroxy-(5Z,8Z,11Z,14Z)-eicosatetraenoate + oxidized [NADPH--hemoprotein reductase] + H2O + H(+)</text>
        <dbReference type="Rhea" id="RHEA:49968"/>
        <dbReference type="Rhea" id="RHEA-COMP:11964"/>
        <dbReference type="Rhea" id="RHEA-COMP:11965"/>
        <dbReference type="ChEBI" id="CHEBI:15377"/>
        <dbReference type="ChEBI" id="CHEBI:15378"/>
        <dbReference type="ChEBI" id="CHEBI:15379"/>
        <dbReference type="ChEBI" id="CHEBI:32395"/>
        <dbReference type="ChEBI" id="CHEBI:57618"/>
        <dbReference type="ChEBI" id="CHEBI:58210"/>
        <dbReference type="ChEBI" id="CHEBI:132016"/>
    </reaction>
    <physiologicalReaction direction="left-to-right" evidence="3">
        <dbReference type="Rhea" id="RHEA:49969"/>
    </physiologicalReaction>
</comment>
<comment type="catalytic activity">
    <reaction evidence="3">
        <text>(5Z,8Z,11Z,14Z)-eicosatetraenoate + reduced [NADPH--hemoprotein reductase] + O2 = 18-hydroxy-(5Z,8Z,11Z,14Z)-eicosatetraenoate + oxidized [NADPH--hemoprotein reductase] + H2O + H(+)</text>
        <dbReference type="Rhea" id="RHEA:39811"/>
        <dbReference type="Rhea" id="RHEA-COMP:11964"/>
        <dbReference type="Rhea" id="RHEA-COMP:11965"/>
        <dbReference type="ChEBI" id="CHEBI:15377"/>
        <dbReference type="ChEBI" id="CHEBI:15378"/>
        <dbReference type="ChEBI" id="CHEBI:15379"/>
        <dbReference type="ChEBI" id="CHEBI:32395"/>
        <dbReference type="ChEBI" id="CHEBI:57618"/>
        <dbReference type="ChEBI" id="CHEBI:58210"/>
        <dbReference type="ChEBI" id="CHEBI:63590"/>
    </reaction>
    <physiologicalReaction direction="left-to-right" evidence="3">
        <dbReference type="Rhea" id="RHEA:39812"/>
    </physiologicalReaction>
</comment>
<comment type="catalytic activity">
    <reaction evidence="3">
        <text>(5Z,8Z,11Z,14Z)-eicosatetraenoate + reduced [NADPH--hemoprotein reductase] + O2 = 19-hydroxy-(5Z,8Z,11Z,14Z)-eicosatetraenoate + oxidized [NADPH--hemoprotein reductase] + H2O + H(+)</text>
        <dbReference type="Rhea" id="RHEA:39759"/>
        <dbReference type="Rhea" id="RHEA-COMP:11964"/>
        <dbReference type="Rhea" id="RHEA-COMP:11965"/>
        <dbReference type="ChEBI" id="CHEBI:15377"/>
        <dbReference type="ChEBI" id="CHEBI:15378"/>
        <dbReference type="ChEBI" id="CHEBI:15379"/>
        <dbReference type="ChEBI" id="CHEBI:32395"/>
        <dbReference type="ChEBI" id="CHEBI:57618"/>
        <dbReference type="ChEBI" id="CHEBI:58210"/>
        <dbReference type="ChEBI" id="CHEBI:76627"/>
    </reaction>
    <physiologicalReaction direction="left-to-right" evidence="3">
        <dbReference type="Rhea" id="RHEA:39760"/>
    </physiologicalReaction>
</comment>
<comment type="catalytic activity">
    <reaction evidence="3">
        <text>(5Z,8Z,11Z,14Z,17Z)-eicosapentaenoate + reduced [NADPH--hemoprotein reductase] + O2 = 19-hydroxy-(5Z,8Z,11Z,14Z,17Z)-eicosapentaenoate + oxidized [NADPH--hemoprotein reductase] + H2O + H(+)</text>
        <dbReference type="Rhea" id="RHEA:39787"/>
        <dbReference type="Rhea" id="RHEA-COMP:11964"/>
        <dbReference type="Rhea" id="RHEA-COMP:11965"/>
        <dbReference type="ChEBI" id="CHEBI:15377"/>
        <dbReference type="ChEBI" id="CHEBI:15378"/>
        <dbReference type="ChEBI" id="CHEBI:15379"/>
        <dbReference type="ChEBI" id="CHEBI:57618"/>
        <dbReference type="ChEBI" id="CHEBI:58210"/>
        <dbReference type="ChEBI" id="CHEBI:58562"/>
        <dbReference type="ChEBI" id="CHEBI:76636"/>
    </reaction>
    <physiologicalReaction direction="left-to-right" evidence="3">
        <dbReference type="Rhea" id="RHEA:39788"/>
    </physiologicalReaction>
</comment>
<comment type="catalytic activity">
    <reaction evidence="3">
        <text>(5Z,8Z,11Z,14Z)-eicosatetraenoate + reduced [NADPH--hemoprotein reductase] + O2 = (8R,9S)-epoxy-(5Z,11Z,14Z)-eicosatrienoate + oxidized [NADPH--hemoprotein reductase] + H2O + H(+)</text>
        <dbReference type="Rhea" id="RHEA:49884"/>
        <dbReference type="Rhea" id="RHEA-COMP:11964"/>
        <dbReference type="Rhea" id="RHEA-COMP:11965"/>
        <dbReference type="ChEBI" id="CHEBI:15377"/>
        <dbReference type="ChEBI" id="CHEBI:15378"/>
        <dbReference type="ChEBI" id="CHEBI:15379"/>
        <dbReference type="ChEBI" id="CHEBI:32395"/>
        <dbReference type="ChEBI" id="CHEBI:57618"/>
        <dbReference type="ChEBI" id="CHEBI:58210"/>
        <dbReference type="ChEBI" id="CHEBI:131975"/>
    </reaction>
    <physiologicalReaction direction="left-to-right" evidence="3">
        <dbReference type="Rhea" id="RHEA:49885"/>
    </physiologicalReaction>
</comment>
<comment type="catalytic activity">
    <reaction evidence="3">
        <text>(5Z,8Z,11Z,14Z)-eicosatetraenoate + reduced [NADPH--hemoprotein reductase] + O2 = (11R,12S)-epoxy-(5Z,8Z,14Z)-eicosatrienoate + oxidized [NADPH--hemoprotein reductase] + H2O + H(+)</text>
        <dbReference type="Rhea" id="RHEA:49880"/>
        <dbReference type="Rhea" id="RHEA-COMP:11964"/>
        <dbReference type="Rhea" id="RHEA-COMP:11965"/>
        <dbReference type="ChEBI" id="CHEBI:15377"/>
        <dbReference type="ChEBI" id="CHEBI:15378"/>
        <dbReference type="ChEBI" id="CHEBI:15379"/>
        <dbReference type="ChEBI" id="CHEBI:32395"/>
        <dbReference type="ChEBI" id="CHEBI:57618"/>
        <dbReference type="ChEBI" id="CHEBI:58210"/>
        <dbReference type="ChEBI" id="CHEBI:131970"/>
    </reaction>
    <physiologicalReaction direction="left-to-right" evidence="3">
        <dbReference type="Rhea" id="RHEA:49881"/>
    </physiologicalReaction>
</comment>
<comment type="catalytic activity">
    <reaction evidence="3">
        <text>(5Z,8Z,11Z,14Z)-eicosatetraenoate + reduced [NADPH--hemoprotein reductase] + O2 = (14S,15R)-epoxy-(5Z,8Z,11Z)-eicosatrienoate + oxidized [NADPH--hemoprotein reductase] + H2O + H(+)</text>
        <dbReference type="Rhea" id="RHEA:49856"/>
        <dbReference type="Rhea" id="RHEA-COMP:11964"/>
        <dbReference type="Rhea" id="RHEA-COMP:11965"/>
        <dbReference type="ChEBI" id="CHEBI:15377"/>
        <dbReference type="ChEBI" id="CHEBI:15378"/>
        <dbReference type="ChEBI" id="CHEBI:15379"/>
        <dbReference type="ChEBI" id="CHEBI:32395"/>
        <dbReference type="ChEBI" id="CHEBI:57618"/>
        <dbReference type="ChEBI" id="CHEBI:58210"/>
        <dbReference type="ChEBI" id="CHEBI:131964"/>
    </reaction>
    <physiologicalReaction direction="left-to-right" evidence="3">
        <dbReference type="Rhea" id="RHEA:49857"/>
    </physiologicalReaction>
</comment>
<comment type="catalytic activity">
    <reaction evidence="3">
        <text>(5Z,8Z,11Z,14Z)-eicosatetraenoate + reduced [NADPH--hemoprotein reductase] + O2 = (14R,15S)-epoxy-(5Z,8Z,11Z)-eicosatrienoate + oxidized [NADPH--hemoprotein reductase] + H2O + H(+)</text>
        <dbReference type="Rhea" id="RHEA:49860"/>
        <dbReference type="Rhea" id="RHEA-COMP:11964"/>
        <dbReference type="Rhea" id="RHEA-COMP:11965"/>
        <dbReference type="ChEBI" id="CHEBI:15377"/>
        <dbReference type="ChEBI" id="CHEBI:15378"/>
        <dbReference type="ChEBI" id="CHEBI:15379"/>
        <dbReference type="ChEBI" id="CHEBI:32395"/>
        <dbReference type="ChEBI" id="CHEBI:57618"/>
        <dbReference type="ChEBI" id="CHEBI:58210"/>
        <dbReference type="ChEBI" id="CHEBI:131965"/>
    </reaction>
    <physiologicalReaction direction="left-to-right" evidence="3">
        <dbReference type="Rhea" id="RHEA:49861"/>
    </physiologicalReaction>
</comment>
<comment type="catalytic activity">
    <reaction evidence="3">
        <text>(5Z,8Z,11Z,14Z,17Z)-eicosapentaenoate + reduced [NADPH--hemoprotein reductase] + O2 = (17R,18S)-epoxy-(5Z,8Z,11Z,14Z)-eicosatetraenoate + oxidized [NADPH--hemoprotein reductase] + H2O + H(+)</text>
        <dbReference type="Rhea" id="RHEA:39779"/>
        <dbReference type="Rhea" id="RHEA-COMP:11964"/>
        <dbReference type="Rhea" id="RHEA-COMP:11965"/>
        <dbReference type="ChEBI" id="CHEBI:15377"/>
        <dbReference type="ChEBI" id="CHEBI:15378"/>
        <dbReference type="ChEBI" id="CHEBI:15379"/>
        <dbReference type="ChEBI" id="CHEBI:57618"/>
        <dbReference type="ChEBI" id="CHEBI:58210"/>
        <dbReference type="ChEBI" id="CHEBI:58562"/>
        <dbReference type="ChEBI" id="CHEBI:76634"/>
    </reaction>
    <physiologicalReaction direction="left-to-right" evidence="3">
        <dbReference type="Rhea" id="RHEA:39780"/>
    </physiologicalReaction>
</comment>
<comment type="catalytic activity">
    <reaction evidence="3">
        <text>(4Z,7Z,10Z,13Z,16Z,19Z)-docosahexaenoate + reduced [NADPH--hemoprotein reductase] + O2 = (19S,20R)-epoxy-(4Z,7Z,10Z,13Z,16Z)-docosapentaenoate + oxidized [NADPH--hemoprotein reductase] + H2O + H(+)</text>
        <dbReference type="Rhea" id="RHEA:52124"/>
        <dbReference type="Rhea" id="RHEA-COMP:11964"/>
        <dbReference type="Rhea" id="RHEA-COMP:11965"/>
        <dbReference type="ChEBI" id="CHEBI:15377"/>
        <dbReference type="ChEBI" id="CHEBI:15378"/>
        <dbReference type="ChEBI" id="CHEBI:15379"/>
        <dbReference type="ChEBI" id="CHEBI:57618"/>
        <dbReference type="ChEBI" id="CHEBI:58210"/>
        <dbReference type="ChEBI" id="CHEBI:77016"/>
        <dbReference type="ChEBI" id="CHEBI:136411"/>
    </reaction>
    <physiologicalReaction direction="left-to-right" evidence="3">
        <dbReference type="Rhea" id="RHEA:52125"/>
    </physiologicalReaction>
</comment>
<comment type="catalytic activity">
    <reaction evidence="3">
        <text>(4Z,7Z,10Z,13Z,16Z,19Z)-docosahexaenoate + reduced [NADPH--hemoprotein reductase] + O2 = (19R,20S)-epoxy-(4Z,7Z,10Z,13Z,16Z)-docosapentaenoate + oxidized [NADPH--hemoprotein reductase] + H2O + H(+)</text>
        <dbReference type="Rhea" id="RHEA:52120"/>
        <dbReference type="Rhea" id="RHEA-COMP:11964"/>
        <dbReference type="Rhea" id="RHEA-COMP:11965"/>
        <dbReference type="ChEBI" id="CHEBI:15377"/>
        <dbReference type="ChEBI" id="CHEBI:15378"/>
        <dbReference type="ChEBI" id="CHEBI:15379"/>
        <dbReference type="ChEBI" id="CHEBI:57618"/>
        <dbReference type="ChEBI" id="CHEBI:58210"/>
        <dbReference type="ChEBI" id="CHEBI:77016"/>
        <dbReference type="ChEBI" id="CHEBI:136410"/>
    </reaction>
    <physiologicalReaction direction="left-to-right" evidence="3">
        <dbReference type="Rhea" id="RHEA:52121"/>
    </physiologicalReaction>
</comment>
<comment type="catalytic activity">
    <reaction evidence="3">
        <text>all-trans-retinol + reduced [NADPH--hemoprotein reductase] + O2 = all-trans-retinal + oxidized [NADPH--hemoprotein reductase] + 2 H2O + H(+)</text>
        <dbReference type="Rhea" id="RHEA:42092"/>
        <dbReference type="Rhea" id="RHEA-COMP:11964"/>
        <dbReference type="Rhea" id="RHEA-COMP:11965"/>
        <dbReference type="ChEBI" id="CHEBI:15377"/>
        <dbReference type="ChEBI" id="CHEBI:15378"/>
        <dbReference type="ChEBI" id="CHEBI:15379"/>
        <dbReference type="ChEBI" id="CHEBI:17336"/>
        <dbReference type="ChEBI" id="CHEBI:17898"/>
        <dbReference type="ChEBI" id="CHEBI:57618"/>
        <dbReference type="ChEBI" id="CHEBI:58210"/>
    </reaction>
    <physiologicalReaction direction="left-to-right" evidence="3">
        <dbReference type="Rhea" id="RHEA:42093"/>
    </physiologicalReaction>
</comment>
<comment type="catalytic activity">
    <reaction evidence="3">
        <text>all-trans-retinal + reduced [NADPH--hemoprotein reductase] + O2 = all-trans-retinoate + oxidized [NADPH--hemoprotein reductase] + H2O + 2 H(+)</text>
        <dbReference type="Rhea" id="RHEA:42088"/>
        <dbReference type="Rhea" id="RHEA-COMP:11964"/>
        <dbReference type="Rhea" id="RHEA-COMP:11965"/>
        <dbReference type="ChEBI" id="CHEBI:15377"/>
        <dbReference type="ChEBI" id="CHEBI:15378"/>
        <dbReference type="ChEBI" id="CHEBI:15379"/>
        <dbReference type="ChEBI" id="CHEBI:17898"/>
        <dbReference type="ChEBI" id="CHEBI:35291"/>
        <dbReference type="ChEBI" id="CHEBI:57618"/>
        <dbReference type="ChEBI" id="CHEBI:58210"/>
    </reaction>
    <physiologicalReaction direction="left-to-right" evidence="3">
        <dbReference type="Rhea" id="RHEA:42089"/>
    </physiologicalReaction>
</comment>
<comment type="catalytic activity">
    <reaction evidence="3">
        <text>(13S)-hydroperoxy-(9Z,11E)-octadecadienoate = 13-oxo-(9Z,11E)-octadecadienoate + H2O</text>
        <dbReference type="Rhea" id="RHEA:48716"/>
        <dbReference type="ChEBI" id="CHEBI:15377"/>
        <dbReference type="ChEBI" id="CHEBI:57466"/>
        <dbReference type="ChEBI" id="CHEBI:90781"/>
    </reaction>
    <physiologicalReaction direction="left-to-right" evidence="3">
        <dbReference type="Rhea" id="RHEA:48717"/>
    </physiologicalReaction>
</comment>
<comment type="catalytic activity">
    <reaction evidence="3">
        <text>(12S)-hydroperoxy-(5Z,8Z,10E,14Z)-eicosatetraenoate = 12-oxo-(5Z,8Z,10E,14Z)-eicosatetraenoate + H2O</text>
        <dbReference type="Rhea" id="RHEA:37947"/>
        <dbReference type="ChEBI" id="CHEBI:15377"/>
        <dbReference type="ChEBI" id="CHEBI:57444"/>
        <dbReference type="ChEBI" id="CHEBI:75231"/>
        <dbReference type="EC" id="4.2.1.152"/>
    </reaction>
    <physiologicalReaction direction="left-to-right" evidence="3">
        <dbReference type="Rhea" id="RHEA:37948"/>
    </physiologicalReaction>
</comment>
<comment type="catalytic activity">
    <reaction evidence="3">
        <text>(15S)-hydroperoxy-(5Z,8Z,11Z,13E)-eicosatetraenoate = 15-oxo-(5Z,8Z,11Z,13E)-eicosatetraenoate + H2O</text>
        <dbReference type="Rhea" id="RHEA:48636"/>
        <dbReference type="ChEBI" id="CHEBI:15377"/>
        <dbReference type="ChEBI" id="CHEBI:57410"/>
        <dbReference type="ChEBI" id="CHEBI:57446"/>
    </reaction>
    <physiologicalReaction direction="left-to-right" evidence="3">
        <dbReference type="Rhea" id="RHEA:48637"/>
    </physiologicalReaction>
</comment>
<comment type="catalytic activity">
    <reaction evidence="3">
        <text>(5S)-hydroperoxy-(6E,8Z,11Z,14Z)-eicosatetraenoate = 5-oxo-(6E,8Z,11Z,14Z)-eicosatetraenoate + H2O</text>
        <dbReference type="Rhea" id="RHEA:48632"/>
        <dbReference type="ChEBI" id="CHEBI:15377"/>
        <dbReference type="ChEBI" id="CHEBI:57450"/>
        <dbReference type="ChEBI" id="CHEBI:65342"/>
    </reaction>
    <physiologicalReaction direction="left-to-right" evidence="3">
        <dbReference type="Rhea" id="RHEA:48633"/>
    </physiologicalReaction>
</comment>
<comment type="cofactor">
    <cofactor evidence="1">
        <name>heme</name>
        <dbReference type="ChEBI" id="CHEBI:30413"/>
    </cofactor>
</comment>
<comment type="pathway">
    <text evidence="3">Steroid hormone biosynthesis.</text>
</comment>
<comment type="pathway">
    <text evidence="3">Lipid metabolism; fatty acid metabolism.</text>
</comment>
<comment type="pathway">
    <text evidence="3">Cofactor metabolism; retinol metabolism.</text>
</comment>
<comment type="subunit">
    <text evidence="2">Interacts with cytosolic chaperones HSP70 and HSP90; this interaction is required for initial targeting to mitochondria. Interacts (via mitochondrial targeting signal) with TOMM40 (via N-terminus); this interaction is required for translocation across the mitochondrial outer membrane.</text>
</comment>
<comment type="subcellular location">
    <subcellularLocation>
        <location evidence="2">Endoplasmic reticulum membrane</location>
        <topology evidence="2">Peripheral membrane protein</topology>
    </subcellularLocation>
    <subcellularLocation>
        <location evidence="2">Mitochondrion inner membrane</location>
        <topology evidence="2">Peripheral membrane protein</topology>
    </subcellularLocation>
    <subcellularLocation>
        <location evidence="2">Microsome membrane</location>
        <topology evidence="2">Peripheral membrane protein</topology>
    </subcellularLocation>
    <subcellularLocation>
        <location evidence="2">Cytoplasm</location>
    </subcellularLocation>
</comment>
<comment type="similarity">
    <text evidence="4">Belongs to the cytochrome P450 family.</text>
</comment>
<evidence type="ECO:0000250" key="1"/>
<evidence type="ECO:0000250" key="2">
    <source>
        <dbReference type="UniProtKB" id="P00185"/>
    </source>
</evidence>
<evidence type="ECO:0000250" key="3">
    <source>
        <dbReference type="UniProtKB" id="P04798"/>
    </source>
</evidence>
<evidence type="ECO:0000305" key="4"/>
<organism>
    <name type="scientific">Felis catus</name>
    <name type="common">Cat</name>
    <name type="synonym">Felis silvestris catus</name>
    <dbReference type="NCBI Taxonomy" id="9685"/>
    <lineage>
        <taxon>Eukaryota</taxon>
        <taxon>Metazoa</taxon>
        <taxon>Chordata</taxon>
        <taxon>Craniata</taxon>
        <taxon>Vertebrata</taxon>
        <taxon>Euteleostomi</taxon>
        <taxon>Mammalia</taxon>
        <taxon>Eutheria</taxon>
        <taxon>Laurasiatheria</taxon>
        <taxon>Carnivora</taxon>
        <taxon>Feliformia</taxon>
        <taxon>Felidae</taxon>
        <taxon>Felinae</taxon>
        <taxon>Felis</taxon>
    </lineage>
</organism>
<proteinExistence type="evidence at transcript level"/>